<organism>
    <name type="scientific">Rickettsia massiliae (strain Mtu5)</name>
    <dbReference type="NCBI Taxonomy" id="416276"/>
    <lineage>
        <taxon>Bacteria</taxon>
        <taxon>Pseudomonadati</taxon>
        <taxon>Pseudomonadota</taxon>
        <taxon>Alphaproteobacteria</taxon>
        <taxon>Rickettsiales</taxon>
        <taxon>Rickettsiaceae</taxon>
        <taxon>Rickettsieae</taxon>
        <taxon>Rickettsia</taxon>
        <taxon>spotted fever group</taxon>
    </lineage>
</organism>
<feature type="chain" id="PRO_0000316287" description="NADH-quinone oxidoreductase subunit F">
    <location>
        <begin position="1"/>
        <end position="421"/>
    </location>
</feature>
<feature type="region of interest" description="Disordered" evidence="3">
    <location>
        <begin position="1"/>
        <end position="25"/>
    </location>
</feature>
<feature type="compositionally biased region" description="Basic and acidic residues" evidence="3">
    <location>
        <begin position="16"/>
        <end position="25"/>
    </location>
</feature>
<feature type="binding site" evidence="1">
    <location>
        <begin position="54"/>
        <end position="63"/>
    </location>
    <ligand>
        <name>NAD(+)</name>
        <dbReference type="ChEBI" id="CHEBI:57540"/>
    </ligand>
</feature>
<feature type="binding site" evidence="1">
    <location>
        <begin position="166"/>
        <end position="213"/>
    </location>
    <ligand>
        <name>FMN</name>
        <dbReference type="ChEBI" id="CHEBI:58210"/>
    </ligand>
</feature>
<feature type="binding site" evidence="2">
    <location>
        <position position="344"/>
    </location>
    <ligand>
        <name>[4Fe-4S] cluster</name>
        <dbReference type="ChEBI" id="CHEBI:49883"/>
    </ligand>
</feature>
<feature type="binding site" evidence="2">
    <location>
        <position position="347"/>
    </location>
    <ligand>
        <name>[4Fe-4S] cluster</name>
        <dbReference type="ChEBI" id="CHEBI:49883"/>
    </ligand>
</feature>
<feature type="binding site" evidence="2">
    <location>
        <position position="350"/>
    </location>
    <ligand>
        <name>[4Fe-4S] cluster</name>
        <dbReference type="ChEBI" id="CHEBI:49883"/>
    </ligand>
</feature>
<feature type="binding site" evidence="2">
    <location>
        <position position="390"/>
    </location>
    <ligand>
        <name>[4Fe-4S] cluster</name>
        <dbReference type="ChEBI" id="CHEBI:49883"/>
    </ligand>
</feature>
<dbReference type="EC" id="7.1.1.-"/>
<dbReference type="EMBL" id="CP000683">
    <property type="protein sequence ID" value="ABV84456.1"/>
    <property type="molecule type" value="Genomic_DNA"/>
</dbReference>
<dbReference type="RefSeq" id="WP_012152434.1">
    <property type="nucleotide sequence ID" value="NC_009900.1"/>
</dbReference>
<dbReference type="SMR" id="A8F0M0"/>
<dbReference type="KEGG" id="rms:RMA_0162"/>
<dbReference type="HOGENOM" id="CLU_014881_0_1_5"/>
<dbReference type="Proteomes" id="UP000001311">
    <property type="component" value="Chromosome"/>
</dbReference>
<dbReference type="GO" id="GO:0051539">
    <property type="term" value="F:4 iron, 4 sulfur cluster binding"/>
    <property type="evidence" value="ECO:0007669"/>
    <property type="project" value="UniProtKB-KW"/>
</dbReference>
<dbReference type="GO" id="GO:0010181">
    <property type="term" value="F:FMN binding"/>
    <property type="evidence" value="ECO:0007669"/>
    <property type="project" value="InterPro"/>
</dbReference>
<dbReference type="GO" id="GO:0046872">
    <property type="term" value="F:metal ion binding"/>
    <property type="evidence" value="ECO:0007669"/>
    <property type="project" value="UniProtKB-KW"/>
</dbReference>
<dbReference type="GO" id="GO:0051287">
    <property type="term" value="F:NAD binding"/>
    <property type="evidence" value="ECO:0007669"/>
    <property type="project" value="InterPro"/>
</dbReference>
<dbReference type="GO" id="GO:0008137">
    <property type="term" value="F:NADH dehydrogenase (ubiquinone) activity"/>
    <property type="evidence" value="ECO:0007669"/>
    <property type="project" value="InterPro"/>
</dbReference>
<dbReference type="GO" id="GO:0048038">
    <property type="term" value="F:quinone binding"/>
    <property type="evidence" value="ECO:0007669"/>
    <property type="project" value="UniProtKB-KW"/>
</dbReference>
<dbReference type="FunFam" id="1.20.1440.230:FF:000001">
    <property type="entry name" value="Mitochondrial NADH dehydrogenase flavoprotein 1"/>
    <property type="match status" value="1"/>
</dbReference>
<dbReference type="FunFam" id="3.10.20.600:FF:000001">
    <property type="entry name" value="NADH dehydrogenase [ubiquinone] flavoprotein 1, mitochondrial"/>
    <property type="match status" value="1"/>
</dbReference>
<dbReference type="FunFam" id="3.40.50.11540:FF:000001">
    <property type="entry name" value="NADH dehydrogenase [ubiquinone] flavoprotein 1, mitochondrial"/>
    <property type="match status" value="1"/>
</dbReference>
<dbReference type="Gene3D" id="3.10.20.600">
    <property type="match status" value="1"/>
</dbReference>
<dbReference type="Gene3D" id="3.40.50.11540">
    <property type="entry name" value="NADH-ubiquinone oxidoreductase 51kDa subunit"/>
    <property type="match status" value="1"/>
</dbReference>
<dbReference type="Gene3D" id="1.20.1440.230">
    <property type="entry name" value="NADH-ubiquinone oxidoreductase 51kDa subunit, iron-sulphur binding domain"/>
    <property type="match status" value="1"/>
</dbReference>
<dbReference type="InterPro" id="IPR050837">
    <property type="entry name" value="ComplexI_51kDa_subunit"/>
</dbReference>
<dbReference type="InterPro" id="IPR001949">
    <property type="entry name" value="NADH-UbQ_OxRdtase_51kDa_CS"/>
</dbReference>
<dbReference type="InterPro" id="IPR011537">
    <property type="entry name" value="NADH-UbQ_OxRdtase_suF"/>
</dbReference>
<dbReference type="InterPro" id="IPR011538">
    <property type="entry name" value="Nuo51_FMN-bd"/>
</dbReference>
<dbReference type="InterPro" id="IPR037225">
    <property type="entry name" value="Nuo51_FMN-bd_sf"/>
</dbReference>
<dbReference type="InterPro" id="IPR019575">
    <property type="entry name" value="Nuop51_4Fe4S-bd"/>
</dbReference>
<dbReference type="InterPro" id="IPR037207">
    <property type="entry name" value="Nuop51_4Fe4S-bd_sf"/>
</dbReference>
<dbReference type="InterPro" id="IPR054765">
    <property type="entry name" value="SLBB_dom"/>
</dbReference>
<dbReference type="NCBIfam" id="TIGR01959">
    <property type="entry name" value="nuoF_fam"/>
    <property type="match status" value="1"/>
</dbReference>
<dbReference type="NCBIfam" id="NF010120">
    <property type="entry name" value="PRK13596.1"/>
    <property type="match status" value="1"/>
</dbReference>
<dbReference type="PANTHER" id="PTHR11780:SF10">
    <property type="entry name" value="NADH DEHYDROGENASE [UBIQUINONE] FLAVOPROTEIN 1, MITOCHONDRIAL"/>
    <property type="match status" value="1"/>
</dbReference>
<dbReference type="PANTHER" id="PTHR11780">
    <property type="entry name" value="NADH-UBIQUINONE OXIDOREDUCTASE FLAVOPROTEIN 1 NDUFV1"/>
    <property type="match status" value="1"/>
</dbReference>
<dbReference type="Pfam" id="PF01512">
    <property type="entry name" value="Complex1_51K"/>
    <property type="match status" value="1"/>
</dbReference>
<dbReference type="Pfam" id="PF10589">
    <property type="entry name" value="NADH_4Fe-4S"/>
    <property type="match status" value="1"/>
</dbReference>
<dbReference type="Pfam" id="PF22461">
    <property type="entry name" value="SLBB_2"/>
    <property type="match status" value="1"/>
</dbReference>
<dbReference type="SMART" id="SM00928">
    <property type="entry name" value="NADH_4Fe-4S"/>
    <property type="match status" value="1"/>
</dbReference>
<dbReference type="SUPFAM" id="SSF142019">
    <property type="entry name" value="Nqo1 FMN-binding domain-like"/>
    <property type="match status" value="1"/>
</dbReference>
<dbReference type="SUPFAM" id="SSF142984">
    <property type="entry name" value="Nqo1 middle domain-like"/>
    <property type="match status" value="1"/>
</dbReference>
<dbReference type="SUPFAM" id="SSF140490">
    <property type="entry name" value="Nqo1C-terminal domain-like"/>
    <property type="match status" value="1"/>
</dbReference>
<dbReference type="PROSITE" id="PS00644">
    <property type="entry name" value="COMPLEX1_51K_1"/>
    <property type="match status" value="1"/>
</dbReference>
<dbReference type="PROSITE" id="PS00645">
    <property type="entry name" value="COMPLEX1_51K_2"/>
    <property type="match status" value="1"/>
</dbReference>
<comment type="function">
    <text evidence="1">NDH-1 shuttles electrons from NADH, via FMN and iron-sulfur (Fe-S) centers, to quinones in the respiratory chain. Couples the redox reaction to proton translocation (for every two electrons transferred, four hydrogen ions are translocated across the cytoplasmic membrane), and thus conserves the redox energy in a proton gradient (By similarity).</text>
</comment>
<comment type="catalytic activity">
    <reaction>
        <text>a quinone + NADH + 5 H(+)(in) = a quinol + NAD(+) + 4 H(+)(out)</text>
        <dbReference type="Rhea" id="RHEA:57888"/>
        <dbReference type="ChEBI" id="CHEBI:15378"/>
        <dbReference type="ChEBI" id="CHEBI:24646"/>
        <dbReference type="ChEBI" id="CHEBI:57540"/>
        <dbReference type="ChEBI" id="CHEBI:57945"/>
        <dbReference type="ChEBI" id="CHEBI:132124"/>
    </reaction>
</comment>
<comment type="cofactor">
    <cofactor evidence="4">
        <name>FMN</name>
        <dbReference type="ChEBI" id="CHEBI:58210"/>
    </cofactor>
    <text evidence="4">Binds 1 FMN.</text>
</comment>
<comment type="cofactor">
    <cofactor evidence="4">
        <name>[4Fe-4S] cluster</name>
        <dbReference type="ChEBI" id="CHEBI:49883"/>
    </cofactor>
    <text evidence="4">Binds 1 [4Fe-4S] cluster.</text>
</comment>
<comment type="similarity">
    <text evidence="4">Belongs to the complex I 51 kDa subunit family.</text>
</comment>
<name>NUOF_RICM5</name>
<sequence>MLKEEDKIFTNLHGQQSHDLKSSKKRGDWENTKALLDKGRDFIVEEVKKSGLRGRGGAGFSTGMKWSFMPKNSEKPCYLVVNADESEPGTCKDRDILRFEPHKLIEGCLLASFAIGANNCYIYIRGEFYNEASNIQRALDEAYKEGLIGKNACDSGFDCNIYLHRGAGAYICGEETALLESLEGKKGMPRLKPPFPAGFGLYGCPTTINNVESIAVVPTILRRGASWFAGIGKPNNTGTKIFCISGHVNKPCNVEEAMGISLKELIEKYAGGVRGGWDNLKAIIPGGSSVPLLPKLLCEVEMDFDSLRTAGSGLGTGGIIVMDKSTDIIYAIARLSKFYMHESCGQCTPCREGTGWMWRVMMRLVKGNAKKSEIDELLNVTKEIEGHTICALGDAAAWPIQGLIRHFRSEIEARIKSYSVV</sequence>
<gene>
    <name type="primary">nuoF</name>
    <name type="ordered locus">RMA_0162</name>
</gene>
<keyword id="KW-0004">4Fe-4S</keyword>
<keyword id="KW-0285">Flavoprotein</keyword>
<keyword id="KW-0288">FMN</keyword>
<keyword id="KW-0408">Iron</keyword>
<keyword id="KW-0411">Iron-sulfur</keyword>
<keyword id="KW-0479">Metal-binding</keyword>
<keyword id="KW-0520">NAD</keyword>
<keyword id="KW-0874">Quinone</keyword>
<keyword id="KW-1278">Translocase</keyword>
<protein>
    <recommendedName>
        <fullName>NADH-quinone oxidoreductase subunit F</fullName>
        <ecNumber>7.1.1.-</ecNumber>
    </recommendedName>
    <alternativeName>
        <fullName>NADH dehydrogenase I subunit F</fullName>
    </alternativeName>
    <alternativeName>
        <fullName>NDH-1 subunit F</fullName>
    </alternativeName>
</protein>
<accession>A8F0M0</accession>
<reference key="1">
    <citation type="journal article" date="2007" name="Genome Res.">
        <title>Lateral gene transfer between obligate intracellular bacteria: evidence from the Rickettsia massiliae genome.</title>
        <authorList>
            <person name="Blanc G."/>
            <person name="Ogata H."/>
            <person name="Robert C."/>
            <person name="Audic S."/>
            <person name="Claverie J.-M."/>
            <person name="Raoult D."/>
        </authorList>
    </citation>
    <scope>NUCLEOTIDE SEQUENCE [LARGE SCALE GENOMIC DNA]</scope>
    <source>
        <strain>Mtu5</strain>
    </source>
</reference>
<evidence type="ECO:0000250" key="1"/>
<evidence type="ECO:0000255" key="2"/>
<evidence type="ECO:0000256" key="3">
    <source>
        <dbReference type="SAM" id="MobiDB-lite"/>
    </source>
</evidence>
<evidence type="ECO:0000305" key="4"/>
<proteinExistence type="inferred from homology"/>